<protein>
    <recommendedName>
        <fullName evidence="1">Uroporphyrinogen decarboxylase</fullName>
        <shortName evidence="1">UPD</shortName>
        <shortName evidence="1">URO-D</shortName>
        <ecNumber evidence="1">4.1.1.37</ecNumber>
    </recommendedName>
</protein>
<keyword id="KW-0963">Cytoplasm</keyword>
<keyword id="KW-0210">Decarboxylase</keyword>
<keyword id="KW-0456">Lyase</keyword>
<keyword id="KW-0627">Porphyrin biosynthesis</keyword>
<name>DCUP_WOLPM</name>
<gene>
    <name evidence="1" type="primary">hemE</name>
    <name type="ordered locus">WD_1028</name>
</gene>
<organism>
    <name type="scientific">Wolbachia pipientis wMel</name>
    <dbReference type="NCBI Taxonomy" id="163164"/>
    <lineage>
        <taxon>Bacteria</taxon>
        <taxon>Pseudomonadati</taxon>
        <taxon>Pseudomonadota</taxon>
        <taxon>Alphaproteobacteria</taxon>
        <taxon>Rickettsiales</taxon>
        <taxon>Anaplasmataceae</taxon>
        <taxon>Wolbachieae</taxon>
        <taxon>Wolbachia</taxon>
    </lineage>
</organism>
<evidence type="ECO:0000255" key="1">
    <source>
        <dbReference type="HAMAP-Rule" id="MF_00218"/>
    </source>
</evidence>
<sequence length="338" mass="37843">MESGKTTIAKIIKRNEPGGRVPIWLMRQAGRSLPEYRKAVENMNNFMEICYNTDLVTELTLQPVTRFDMDAAIIFSDILIIADVLGCDVNFVRGVGPIIKPVESPKELKGPQEIETKTLPILNAIKKVRSQLPKEKSLIGFAGGPWTVASYIIEGRSSKTFSKVLNFYPSCLKEIIERITEVTIIYLIKQIEFGADVIQLFDSNAGALSEPLFKEYVIEPTKRIILAIKDRFSDFPIIGFPRSAGNLYKDYCEQTGVSAVSIDYNVPIKWAKANLNIPLQGNLDPNLLAYNKTEAIKEAKRIIDCFRDLPFIFNLGHGVLPDTPVENIAALVNLVKSY</sequence>
<dbReference type="EC" id="4.1.1.37" evidence="1"/>
<dbReference type="EMBL" id="AE017196">
    <property type="protein sequence ID" value="AAS14687.1"/>
    <property type="molecule type" value="Genomic_DNA"/>
</dbReference>
<dbReference type="RefSeq" id="WP_010082013.1">
    <property type="nucleotide sequence ID" value="NZ_OX384529.1"/>
</dbReference>
<dbReference type="SMR" id="Q73GC9"/>
<dbReference type="EnsemblBacteria" id="AAS14687">
    <property type="protein sequence ID" value="AAS14687"/>
    <property type="gene ID" value="WD_1028"/>
</dbReference>
<dbReference type="GeneID" id="70036507"/>
<dbReference type="KEGG" id="wol:WD_1028"/>
<dbReference type="eggNOG" id="COG0407">
    <property type="taxonomic scope" value="Bacteria"/>
</dbReference>
<dbReference type="UniPathway" id="UPA00251">
    <property type="reaction ID" value="UER00321"/>
</dbReference>
<dbReference type="Proteomes" id="UP000008215">
    <property type="component" value="Chromosome"/>
</dbReference>
<dbReference type="GO" id="GO:0005829">
    <property type="term" value="C:cytosol"/>
    <property type="evidence" value="ECO:0007669"/>
    <property type="project" value="TreeGrafter"/>
</dbReference>
<dbReference type="GO" id="GO:0004853">
    <property type="term" value="F:uroporphyrinogen decarboxylase activity"/>
    <property type="evidence" value="ECO:0007669"/>
    <property type="project" value="UniProtKB-UniRule"/>
</dbReference>
<dbReference type="GO" id="GO:0006782">
    <property type="term" value="P:protoporphyrinogen IX biosynthetic process"/>
    <property type="evidence" value="ECO:0007669"/>
    <property type="project" value="UniProtKB-UniRule"/>
</dbReference>
<dbReference type="CDD" id="cd00717">
    <property type="entry name" value="URO-D"/>
    <property type="match status" value="1"/>
</dbReference>
<dbReference type="Gene3D" id="3.20.20.210">
    <property type="match status" value="1"/>
</dbReference>
<dbReference type="HAMAP" id="MF_00218">
    <property type="entry name" value="URO_D"/>
    <property type="match status" value="1"/>
</dbReference>
<dbReference type="InterPro" id="IPR038071">
    <property type="entry name" value="UROD/MetE-like_sf"/>
</dbReference>
<dbReference type="InterPro" id="IPR006361">
    <property type="entry name" value="Uroporphyrinogen_deCO2ase_HemE"/>
</dbReference>
<dbReference type="InterPro" id="IPR000257">
    <property type="entry name" value="Uroporphyrinogen_deCOase"/>
</dbReference>
<dbReference type="NCBIfam" id="TIGR01464">
    <property type="entry name" value="hemE"/>
    <property type="match status" value="1"/>
</dbReference>
<dbReference type="PANTHER" id="PTHR21091">
    <property type="entry name" value="METHYLTETRAHYDROFOLATE:HOMOCYSTEINE METHYLTRANSFERASE RELATED"/>
    <property type="match status" value="1"/>
</dbReference>
<dbReference type="PANTHER" id="PTHR21091:SF169">
    <property type="entry name" value="UROPORPHYRINOGEN DECARBOXYLASE"/>
    <property type="match status" value="1"/>
</dbReference>
<dbReference type="Pfam" id="PF01208">
    <property type="entry name" value="URO-D"/>
    <property type="match status" value="1"/>
</dbReference>
<dbReference type="SUPFAM" id="SSF51726">
    <property type="entry name" value="UROD/MetE-like"/>
    <property type="match status" value="1"/>
</dbReference>
<dbReference type="PROSITE" id="PS00906">
    <property type="entry name" value="UROD_1"/>
    <property type="match status" value="1"/>
</dbReference>
<dbReference type="PROSITE" id="PS00907">
    <property type="entry name" value="UROD_2"/>
    <property type="match status" value="1"/>
</dbReference>
<comment type="function">
    <text evidence="1">Catalyzes the decarboxylation of four acetate groups of uroporphyrinogen-III to yield coproporphyrinogen-III.</text>
</comment>
<comment type="catalytic activity">
    <reaction evidence="1">
        <text>uroporphyrinogen III + 4 H(+) = coproporphyrinogen III + 4 CO2</text>
        <dbReference type="Rhea" id="RHEA:19865"/>
        <dbReference type="ChEBI" id="CHEBI:15378"/>
        <dbReference type="ChEBI" id="CHEBI:16526"/>
        <dbReference type="ChEBI" id="CHEBI:57308"/>
        <dbReference type="ChEBI" id="CHEBI:57309"/>
        <dbReference type="EC" id="4.1.1.37"/>
    </reaction>
</comment>
<comment type="pathway">
    <text evidence="1">Porphyrin-containing compound metabolism; protoporphyrin-IX biosynthesis; coproporphyrinogen-III from 5-aminolevulinate: step 4/4.</text>
</comment>
<comment type="subunit">
    <text evidence="1">Homodimer.</text>
</comment>
<comment type="subcellular location">
    <subcellularLocation>
        <location evidence="1">Cytoplasm</location>
    </subcellularLocation>
</comment>
<comment type="similarity">
    <text evidence="1">Belongs to the uroporphyrinogen decarboxylase family.</text>
</comment>
<proteinExistence type="inferred from homology"/>
<accession>Q73GC9</accession>
<feature type="chain" id="PRO_0000325709" description="Uroporphyrinogen decarboxylase">
    <location>
        <begin position="1"/>
        <end position="338"/>
    </location>
</feature>
<feature type="binding site" evidence="1">
    <location>
        <begin position="27"/>
        <end position="31"/>
    </location>
    <ligand>
        <name>substrate</name>
    </ligand>
</feature>
<feature type="binding site" evidence="1">
    <location>
        <position position="77"/>
    </location>
    <ligand>
        <name>substrate</name>
    </ligand>
</feature>
<feature type="binding site" evidence="1">
    <location>
        <position position="151"/>
    </location>
    <ligand>
        <name>substrate</name>
    </ligand>
</feature>
<feature type="binding site" evidence="1">
    <location>
        <position position="203"/>
    </location>
    <ligand>
        <name>substrate</name>
    </ligand>
</feature>
<feature type="binding site" evidence="1">
    <location>
        <position position="317"/>
    </location>
    <ligand>
        <name>substrate</name>
    </ligand>
</feature>
<feature type="site" description="Transition state stabilizer" evidence="1">
    <location>
        <position position="77"/>
    </location>
</feature>
<reference key="1">
    <citation type="journal article" date="2004" name="PLoS Biol.">
        <title>Phylogenomics of the reproductive parasite Wolbachia pipientis wMel: a streamlined genome overrun by mobile genetic elements.</title>
        <authorList>
            <person name="Wu M."/>
            <person name="Sun L.V."/>
            <person name="Vamathevan J.J."/>
            <person name="Riegler M."/>
            <person name="DeBoy R.T."/>
            <person name="Brownlie J.C."/>
            <person name="McGraw E.A."/>
            <person name="Martin W."/>
            <person name="Esser C."/>
            <person name="Ahmadinejad N."/>
            <person name="Wiegand C."/>
            <person name="Madupu R."/>
            <person name="Beanan M.J."/>
            <person name="Brinkac L.M."/>
            <person name="Daugherty S.C."/>
            <person name="Durkin A.S."/>
            <person name="Kolonay J.F."/>
            <person name="Nelson W.C."/>
            <person name="Mohamoud Y."/>
            <person name="Lee P."/>
            <person name="Berry K.J."/>
            <person name="Young M.B."/>
            <person name="Utterback T.R."/>
            <person name="Weidman J.F."/>
            <person name="Nierman W.C."/>
            <person name="Paulsen I.T."/>
            <person name="Nelson K.E."/>
            <person name="Tettelin H."/>
            <person name="O'Neill S.L."/>
            <person name="Eisen J.A."/>
        </authorList>
    </citation>
    <scope>NUCLEOTIDE SEQUENCE [LARGE SCALE GENOMIC DNA]</scope>
</reference>